<accession>O05516</accession>
<accession>Q797D5</accession>
<protein>
    <recommendedName>
        <fullName>tRNA threonylcarbamoyladenosine biosynthesis protein TsaB</fullName>
    </recommendedName>
    <alternativeName>
        <fullName>t(6)A37 threonylcarbamoyladenosine biosynthesis protein TsaB</fullName>
    </alternativeName>
</protein>
<name>TSAB_BACSU</name>
<keyword id="KW-0963">Cytoplasm</keyword>
<keyword id="KW-1185">Reference proteome</keyword>
<keyword id="KW-0819">tRNA processing</keyword>
<comment type="function">
    <text evidence="2">Required for the formation of a threonylcarbamoyl group on adenosine at position 37 (t(6)A37) in tRNAs that read codons beginning with adenine. Is involved in the transfer of the threonylcarbamoyl moiety of threonylcarbamoyl-AMP (TC-AMP) to the N6 group of A37, together with TsaD and TsaE; this reaction does not require ATP in vitro. TsaB seems to play an indirect role in the t(6)A biosynthesis pathway, possibly in regulating the core enzymatic function of TsaD.</text>
</comment>
<comment type="subunit">
    <text evidence="4">Forms a heterodimer with TsaE.</text>
</comment>
<comment type="subcellular location">
    <subcellularLocation>
        <location evidence="1">Cytoplasm</location>
    </subcellularLocation>
</comment>
<comment type="disruption phenotype">
    <text evidence="1">Cells lacking this gene display a slow growth phenotype. Cell size, shape and nucleoid morphology remain unchanged.</text>
</comment>
<comment type="miscellaneous">
    <text evidence="5">The four proteins YwlC, TsaD, TsaB and TsaE are necessary and sufficient for tRNA(NNU) t(6)A37 threonylcarbamoyladenosine biosynthesis in vitro in B.subtilis.</text>
</comment>
<comment type="similarity">
    <text evidence="3">Belongs to the KAE1 / TsaD family. TsaB subfamily.</text>
</comment>
<comment type="caution">
    <text evidence="3">The well-known t(6)A modification appears to be a hydrolyzed artifact of natural cyclic t(6)A (ct(6)A) that occurs during the preparation and handling of tRNA in B.subtilis and many other species (PubMed:23242255). In these species, the t(6)A modification is processed further by dehydration into ct(6)A, a reaction catalyzed by TcdA.</text>
</comment>
<evidence type="ECO:0000269" key="1">
    <source>
    </source>
</evidence>
<evidence type="ECO:0000269" key="2">
    <source>
    </source>
</evidence>
<evidence type="ECO:0000305" key="3"/>
<evidence type="ECO:0000305" key="4">
    <source>
    </source>
</evidence>
<evidence type="ECO:0000305" key="5">
    <source>
    </source>
</evidence>
<organism>
    <name type="scientific">Bacillus subtilis (strain 168)</name>
    <dbReference type="NCBI Taxonomy" id="224308"/>
    <lineage>
        <taxon>Bacteria</taxon>
        <taxon>Bacillati</taxon>
        <taxon>Bacillota</taxon>
        <taxon>Bacilli</taxon>
        <taxon>Bacillales</taxon>
        <taxon>Bacillaceae</taxon>
        <taxon>Bacillus</taxon>
    </lineage>
</organism>
<dbReference type="EMBL" id="D88802">
    <property type="protein sequence ID" value="BAA19716.1"/>
    <property type="molecule type" value="Genomic_DNA"/>
</dbReference>
<dbReference type="EMBL" id="AL009126">
    <property type="protein sequence ID" value="CAB12411.1"/>
    <property type="molecule type" value="Genomic_DNA"/>
</dbReference>
<dbReference type="PIR" id="D69786">
    <property type="entry name" value="D69786"/>
</dbReference>
<dbReference type="RefSeq" id="NP_388473.1">
    <property type="nucleotide sequence ID" value="NC_000964.3"/>
</dbReference>
<dbReference type="RefSeq" id="WP_003234078.1">
    <property type="nucleotide sequence ID" value="NZ_OZ025638.1"/>
</dbReference>
<dbReference type="SMR" id="O05516"/>
<dbReference type="FunCoup" id="O05516">
    <property type="interactions" value="484"/>
</dbReference>
<dbReference type="STRING" id="224308.BSU05920"/>
<dbReference type="PaxDb" id="224308-BSU05920"/>
<dbReference type="EnsemblBacteria" id="CAB12411">
    <property type="protein sequence ID" value="CAB12411"/>
    <property type="gene ID" value="BSU_05920"/>
</dbReference>
<dbReference type="GeneID" id="939874"/>
<dbReference type="KEGG" id="bsu:BSU05920"/>
<dbReference type="PATRIC" id="fig|224308.179.peg.637"/>
<dbReference type="eggNOG" id="COG1214">
    <property type="taxonomic scope" value="Bacteria"/>
</dbReference>
<dbReference type="InParanoid" id="O05516"/>
<dbReference type="OrthoDB" id="9784166at2"/>
<dbReference type="PhylomeDB" id="O05516"/>
<dbReference type="BioCyc" id="BSUB:BSU05920-MONOMER"/>
<dbReference type="Proteomes" id="UP000001570">
    <property type="component" value="Chromosome"/>
</dbReference>
<dbReference type="GO" id="GO:0005829">
    <property type="term" value="C:cytosol"/>
    <property type="evidence" value="ECO:0000318"/>
    <property type="project" value="GO_Central"/>
</dbReference>
<dbReference type="GO" id="GO:0002949">
    <property type="term" value="P:tRNA threonylcarbamoyladenosine modification"/>
    <property type="evidence" value="ECO:0000314"/>
    <property type="project" value="UniProtKB"/>
</dbReference>
<dbReference type="CDD" id="cd24032">
    <property type="entry name" value="ASKHA_NBD_TsaB"/>
    <property type="match status" value="1"/>
</dbReference>
<dbReference type="Gene3D" id="3.30.420.40">
    <property type="match status" value="2"/>
</dbReference>
<dbReference type="InterPro" id="IPR043129">
    <property type="entry name" value="ATPase_NBD"/>
</dbReference>
<dbReference type="InterPro" id="IPR000905">
    <property type="entry name" value="Gcp-like_dom"/>
</dbReference>
<dbReference type="InterPro" id="IPR022496">
    <property type="entry name" value="T6A_TsaB"/>
</dbReference>
<dbReference type="NCBIfam" id="TIGR03725">
    <property type="entry name" value="T6A_YeaZ"/>
    <property type="match status" value="1"/>
</dbReference>
<dbReference type="PANTHER" id="PTHR11735">
    <property type="entry name" value="TRNA N6-ADENOSINE THREONYLCARBAMOYLTRANSFERASE"/>
    <property type="match status" value="1"/>
</dbReference>
<dbReference type="PANTHER" id="PTHR11735:SF11">
    <property type="entry name" value="TRNA THREONYLCARBAMOYLADENOSINE BIOSYNTHESIS PROTEIN TSAB"/>
    <property type="match status" value="1"/>
</dbReference>
<dbReference type="Pfam" id="PF00814">
    <property type="entry name" value="TsaD"/>
    <property type="match status" value="1"/>
</dbReference>
<dbReference type="SUPFAM" id="SSF53067">
    <property type="entry name" value="Actin-like ATPase domain"/>
    <property type="match status" value="2"/>
</dbReference>
<feature type="chain" id="PRO_0000387461" description="tRNA threonylcarbamoyladenosine biosynthesis protein TsaB">
    <location>
        <begin position="1"/>
        <end position="229"/>
    </location>
</feature>
<proteinExistence type="evidence at protein level"/>
<sequence length="229" mass="25243">MTILAIDTSNYTLGIALLREDTVIAEYITYLKKNHSVRAMPAVHSLLNDCDMAPQDLSKIVVAKGPGSYTGVRIGVTLAKTLAWSLDIPISAVSSLETLAANGRHFDGLISPIFDARRGQVYTGLYQYKNGLLEQVVPDQNVMLADWLEMLKEKDRPVLFLGHDTSLHKQMIEDVLGTKGFIGTAAQHNPRPSELAFLGKEKEAADVHGLVPDYLRLAEAEAKWIESQK</sequence>
<gene>
    <name type="primary">tsaB</name>
    <name type="synonym">ydiC</name>
    <name type="ordered locus">BSU05920</name>
</gene>
<reference key="1">
    <citation type="journal article" date="1997" name="Microbiology">
        <title>Nucleotide sequence and analysis of the phoB-rrnE-groESL region of the Bacillus subtilis chromosome.</title>
        <authorList>
            <person name="Sadaie Y."/>
            <person name="Yata K."/>
            <person name="Fujita M."/>
            <person name="Sagai H."/>
            <person name="Itaya M."/>
            <person name="Kasahara Y."/>
            <person name="Ogasawara N."/>
        </authorList>
    </citation>
    <scope>NUCLEOTIDE SEQUENCE [GENOMIC DNA]</scope>
    <source>
        <strain>168 / JH642</strain>
    </source>
</reference>
<reference key="2">
    <citation type="journal article" date="1997" name="Nature">
        <title>The complete genome sequence of the Gram-positive bacterium Bacillus subtilis.</title>
        <authorList>
            <person name="Kunst F."/>
            <person name="Ogasawara N."/>
            <person name="Moszer I."/>
            <person name="Albertini A.M."/>
            <person name="Alloni G."/>
            <person name="Azevedo V."/>
            <person name="Bertero M.G."/>
            <person name="Bessieres P."/>
            <person name="Bolotin A."/>
            <person name="Borchert S."/>
            <person name="Borriss R."/>
            <person name="Boursier L."/>
            <person name="Brans A."/>
            <person name="Braun M."/>
            <person name="Brignell S.C."/>
            <person name="Bron S."/>
            <person name="Brouillet S."/>
            <person name="Bruschi C.V."/>
            <person name="Caldwell B."/>
            <person name="Capuano V."/>
            <person name="Carter N.M."/>
            <person name="Choi S.-K."/>
            <person name="Codani J.-J."/>
            <person name="Connerton I.F."/>
            <person name="Cummings N.J."/>
            <person name="Daniel R.A."/>
            <person name="Denizot F."/>
            <person name="Devine K.M."/>
            <person name="Duesterhoeft A."/>
            <person name="Ehrlich S.D."/>
            <person name="Emmerson P.T."/>
            <person name="Entian K.-D."/>
            <person name="Errington J."/>
            <person name="Fabret C."/>
            <person name="Ferrari E."/>
            <person name="Foulger D."/>
            <person name="Fritz C."/>
            <person name="Fujita M."/>
            <person name="Fujita Y."/>
            <person name="Fuma S."/>
            <person name="Galizzi A."/>
            <person name="Galleron N."/>
            <person name="Ghim S.-Y."/>
            <person name="Glaser P."/>
            <person name="Goffeau A."/>
            <person name="Golightly E.J."/>
            <person name="Grandi G."/>
            <person name="Guiseppi G."/>
            <person name="Guy B.J."/>
            <person name="Haga K."/>
            <person name="Haiech J."/>
            <person name="Harwood C.R."/>
            <person name="Henaut A."/>
            <person name="Hilbert H."/>
            <person name="Holsappel S."/>
            <person name="Hosono S."/>
            <person name="Hullo M.-F."/>
            <person name="Itaya M."/>
            <person name="Jones L.-M."/>
            <person name="Joris B."/>
            <person name="Karamata D."/>
            <person name="Kasahara Y."/>
            <person name="Klaerr-Blanchard M."/>
            <person name="Klein C."/>
            <person name="Kobayashi Y."/>
            <person name="Koetter P."/>
            <person name="Koningstein G."/>
            <person name="Krogh S."/>
            <person name="Kumano M."/>
            <person name="Kurita K."/>
            <person name="Lapidus A."/>
            <person name="Lardinois S."/>
            <person name="Lauber J."/>
            <person name="Lazarevic V."/>
            <person name="Lee S.-M."/>
            <person name="Levine A."/>
            <person name="Liu H."/>
            <person name="Masuda S."/>
            <person name="Mauel C."/>
            <person name="Medigue C."/>
            <person name="Medina N."/>
            <person name="Mellado R.P."/>
            <person name="Mizuno M."/>
            <person name="Moestl D."/>
            <person name="Nakai S."/>
            <person name="Noback M."/>
            <person name="Noone D."/>
            <person name="O'Reilly M."/>
            <person name="Ogawa K."/>
            <person name="Ogiwara A."/>
            <person name="Oudega B."/>
            <person name="Park S.-H."/>
            <person name="Parro V."/>
            <person name="Pohl T.M."/>
            <person name="Portetelle D."/>
            <person name="Porwollik S."/>
            <person name="Prescott A.M."/>
            <person name="Presecan E."/>
            <person name="Pujic P."/>
            <person name="Purnelle B."/>
            <person name="Rapoport G."/>
            <person name="Rey M."/>
            <person name="Reynolds S."/>
            <person name="Rieger M."/>
            <person name="Rivolta C."/>
            <person name="Rocha E."/>
            <person name="Roche B."/>
            <person name="Rose M."/>
            <person name="Sadaie Y."/>
            <person name="Sato T."/>
            <person name="Scanlan E."/>
            <person name="Schleich S."/>
            <person name="Schroeter R."/>
            <person name="Scoffone F."/>
            <person name="Sekiguchi J."/>
            <person name="Sekowska A."/>
            <person name="Seror S.J."/>
            <person name="Serror P."/>
            <person name="Shin B.-S."/>
            <person name="Soldo B."/>
            <person name="Sorokin A."/>
            <person name="Tacconi E."/>
            <person name="Takagi T."/>
            <person name="Takahashi H."/>
            <person name="Takemaru K."/>
            <person name="Takeuchi M."/>
            <person name="Tamakoshi A."/>
            <person name="Tanaka T."/>
            <person name="Terpstra P."/>
            <person name="Tognoni A."/>
            <person name="Tosato V."/>
            <person name="Uchiyama S."/>
            <person name="Vandenbol M."/>
            <person name="Vannier F."/>
            <person name="Vassarotti A."/>
            <person name="Viari A."/>
            <person name="Wambutt R."/>
            <person name="Wedler E."/>
            <person name="Wedler H."/>
            <person name="Weitzenegger T."/>
            <person name="Winters P."/>
            <person name="Wipat A."/>
            <person name="Yamamoto H."/>
            <person name="Yamane K."/>
            <person name="Yasumoto K."/>
            <person name="Yata K."/>
            <person name="Yoshida K."/>
            <person name="Yoshikawa H.-F."/>
            <person name="Zumstein E."/>
            <person name="Yoshikawa H."/>
            <person name="Danchin A."/>
        </authorList>
    </citation>
    <scope>NUCLEOTIDE SEQUENCE [LARGE SCALE GENOMIC DNA]</scope>
    <source>
        <strain>168</strain>
    </source>
</reference>
<reference key="3">
    <citation type="journal article" date="2011" name="EMBO J.">
        <title>A role for the universal Kae1/Qri7/YgjD (COG0533) family in tRNA modification.</title>
        <authorList>
            <person name="El Yacoubi B."/>
            <person name="Hatin I."/>
            <person name="Deutsch C."/>
            <person name="Kahveci T."/>
            <person name="Rousset J.P."/>
            <person name="Iwata-Reuyl D."/>
            <person name="Murzin A.G."/>
            <person name="de Crecy-Lagard V."/>
        </authorList>
    </citation>
    <scope>SUBUNIT</scope>
    <source>
        <strain>168</strain>
    </source>
</reference>
<reference key="4">
    <citation type="journal article" date="2006" name="Microbiology">
        <title>Functional analysis of 11 putative essential genes in Bacillus subtilis.</title>
        <authorList>
            <person name="Hunt A."/>
            <person name="Rawlins J.P."/>
            <person name="Thomaides H.B."/>
            <person name="Errington J."/>
        </authorList>
    </citation>
    <scope>SUBCELLULAR LOCATION</scope>
    <scope>DISRUPTION PHENOTYPE</scope>
    <source>
        <strain>168</strain>
    </source>
</reference>
<reference key="5">
    <citation type="journal article" date="2012" name="Biochemistry">
        <title>Mechanism of N6-threonylcarbamoyladenosine (t(6)A) biosynthesis: isolation and characterization of the intermediate threonylcarbamoyl-AMP.</title>
        <authorList>
            <person name="Lauhon C.T."/>
        </authorList>
    </citation>
    <scope>FUNCTION</scope>
    <source>
        <strain>168</strain>
    </source>
</reference>